<keyword id="KW-0131">Cell cycle</keyword>
<keyword id="KW-0132">Cell division</keyword>
<keyword id="KW-0133">Cell shape</keyword>
<keyword id="KW-0961">Cell wall biogenesis/degradation</keyword>
<keyword id="KW-0963">Cytoplasm</keyword>
<keyword id="KW-0573">Peptidoglycan synthesis</keyword>
<keyword id="KW-0670">Pyruvate</keyword>
<keyword id="KW-1185">Reference proteome</keyword>
<keyword id="KW-0808">Transferase</keyword>
<reference key="1">
    <citation type="journal article" date="2010" name="PLoS ONE">
        <title>The complete genome sequence of Cupriavidus metallidurans strain CH34, a master survivalist in harsh and anthropogenic environments.</title>
        <authorList>
            <person name="Janssen P.J."/>
            <person name="Van Houdt R."/>
            <person name="Moors H."/>
            <person name="Monsieurs P."/>
            <person name="Morin N."/>
            <person name="Michaux A."/>
            <person name="Benotmane M.A."/>
            <person name="Leys N."/>
            <person name="Vallaeys T."/>
            <person name="Lapidus A."/>
            <person name="Monchy S."/>
            <person name="Medigue C."/>
            <person name="Taghavi S."/>
            <person name="McCorkle S."/>
            <person name="Dunn J."/>
            <person name="van der Lelie D."/>
            <person name="Mergeay M."/>
        </authorList>
    </citation>
    <scope>NUCLEOTIDE SEQUENCE [LARGE SCALE GENOMIC DNA]</scope>
    <source>
        <strain>ATCC 43123 / DSM 2839 / NBRC 102507 / CH34</strain>
    </source>
</reference>
<sequence>MDKFQIQGNGPLKGEIRISGAKNAALPILCAGLLTADTVTIGNVPDLQDTRTMLKLLRQMGMKAEMVDGVATLQGADINSPEASYDLVKTMRASILVLGPLVARFGEARVSLPGGCGIGARPVDQHIKGLQAMGAEITIEHGFIHARANRLKGARVVTDMITVTGTENLLMAATLAEGETVLENAAREPEVTDLAELLVKMGAKIEGIGTDRLVVQGVDRLHGAEHKVVADRIEAGTFLCAAAATLGDIVLRGIPPLILDAVLIKLREAGATVETGDDWIRLAMPQRAQAVSFRTSEYPAFPTDMQAQFMALNAVAEGTARITETIFENRFMHVQELNRLGANITAEGNTAVVTGVPRLSGASVMATDLRASASLVIAGLVADGETVIDRIYHLDRGYDRMENKLSAVGAKILRIS</sequence>
<proteinExistence type="inferred from homology"/>
<accession>Q1LIA4</accession>
<evidence type="ECO:0000255" key="1">
    <source>
        <dbReference type="HAMAP-Rule" id="MF_00111"/>
    </source>
</evidence>
<name>MURA_CUPMC</name>
<dbReference type="EC" id="2.5.1.7" evidence="1"/>
<dbReference type="EMBL" id="CP000352">
    <property type="protein sequence ID" value="ABF10122.1"/>
    <property type="molecule type" value="Genomic_DNA"/>
</dbReference>
<dbReference type="RefSeq" id="WP_011517724.1">
    <property type="nucleotide sequence ID" value="NC_007973.1"/>
</dbReference>
<dbReference type="SMR" id="Q1LIA4"/>
<dbReference type="STRING" id="266264.Rmet_3250"/>
<dbReference type="KEGG" id="rme:Rmet_3250"/>
<dbReference type="eggNOG" id="COG0766">
    <property type="taxonomic scope" value="Bacteria"/>
</dbReference>
<dbReference type="HOGENOM" id="CLU_027387_0_0_4"/>
<dbReference type="UniPathway" id="UPA00219"/>
<dbReference type="Proteomes" id="UP000002429">
    <property type="component" value="Chromosome"/>
</dbReference>
<dbReference type="GO" id="GO:0005737">
    <property type="term" value="C:cytoplasm"/>
    <property type="evidence" value="ECO:0007669"/>
    <property type="project" value="UniProtKB-SubCell"/>
</dbReference>
<dbReference type="GO" id="GO:0008760">
    <property type="term" value="F:UDP-N-acetylglucosamine 1-carboxyvinyltransferase activity"/>
    <property type="evidence" value="ECO:0007669"/>
    <property type="project" value="UniProtKB-UniRule"/>
</dbReference>
<dbReference type="GO" id="GO:0051301">
    <property type="term" value="P:cell division"/>
    <property type="evidence" value="ECO:0007669"/>
    <property type="project" value="UniProtKB-KW"/>
</dbReference>
<dbReference type="GO" id="GO:0071555">
    <property type="term" value="P:cell wall organization"/>
    <property type="evidence" value="ECO:0007669"/>
    <property type="project" value="UniProtKB-KW"/>
</dbReference>
<dbReference type="GO" id="GO:0009252">
    <property type="term" value="P:peptidoglycan biosynthetic process"/>
    <property type="evidence" value="ECO:0007669"/>
    <property type="project" value="UniProtKB-UniRule"/>
</dbReference>
<dbReference type="GO" id="GO:0008360">
    <property type="term" value="P:regulation of cell shape"/>
    <property type="evidence" value="ECO:0007669"/>
    <property type="project" value="UniProtKB-KW"/>
</dbReference>
<dbReference type="GO" id="GO:0019277">
    <property type="term" value="P:UDP-N-acetylgalactosamine biosynthetic process"/>
    <property type="evidence" value="ECO:0007669"/>
    <property type="project" value="InterPro"/>
</dbReference>
<dbReference type="CDD" id="cd01555">
    <property type="entry name" value="UdpNAET"/>
    <property type="match status" value="1"/>
</dbReference>
<dbReference type="FunFam" id="3.65.10.10:FF:000001">
    <property type="entry name" value="UDP-N-acetylglucosamine 1-carboxyvinyltransferase"/>
    <property type="match status" value="1"/>
</dbReference>
<dbReference type="Gene3D" id="3.65.10.10">
    <property type="entry name" value="Enolpyruvate transferase domain"/>
    <property type="match status" value="2"/>
</dbReference>
<dbReference type="HAMAP" id="MF_00111">
    <property type="entry name" value="MurA"/>
    <property type="match status" value="1"/>
</dbReference>
<dbReference type="InterPro" id="IPR001986">
    <property type="entry name" value="Enolpyruvate_Tfrase_dom"/>
</dbReference>
<dbReference type="InterPro" id="IPR036968">
    <property type="entry name" value="Enolpyruvate_Tfrase_sf"/>
</dbReference>
<dbReference type="InterPro" id="IPR050068">
    <property type="entry name" value="MurA_subfamily"/>
</dbReference>
<dbReference type="InterPro" id="IPR013792">
    <property type="entry name" value="RNA3'P_cycl/enolpyr_Trfase_a/b"/>
</dbReference>
<dbReference type="InterPro" id="IPR005750">
    <property type="entry name" value="UDP_GlcNAc_COvinyl_MurA"/>
</dbReference>
<dbReference type="NCBIfam" id="TIGR01072">
    <property type="entry name" value="murA"/>
    <property type="match status" value="1"/>
</dbReference>
<dbReference type="NCBIfam" id="NF006873">
    <property type="entry name" value="PRK09369.1"/>
    <property type="match status" value="1"/>
</dbReference>
<dbReference type="PANTHER" id="PTHR43783">
    <property type="entry name" value="UDP-N-ACETYLGLUCOSAMINE 1-CARBOXYVINYLTRANSFERASE"/>
    <property type="match status" value="1"/>
</dbReference>
<dbReference type="PANTHER" id="PTHR43783:SF1">
    <property type="entry name" value="UDP-N-ACETYLGLUCOSAMINE 1-CARBOXYVINYLTRANSFERASE"/>
    <property type="match status" value="1"/>
</dbReference>
<dbReference type="Pfam" id="PF00275">
    <property type="entry name" value="EPSP_synthase"/>
    <property type="match status" value="1"/>
</dbReference>
<dbReference type="SUPFAM" id="SSF55205">
    <property type="entry name" value="EPT/RTPC-like"/>
    <property type="match status" value="1"/>
</dbReference>
<feature type="chain" id="PRO_1000023080" description="UDP-N-acetylglucosamine 1-carboxyvinyltransferase">
    <location>
        <begin position="1"/>
        <end position="416"/>
    </location>
</feature>
<feature type="active site" description="Proton donor" evidence="1">
    <location>
        <position position="116"/>
    </location>
</feature>
<feature type="binding site" evidence="1">
    <location>
        <begin position="22"/>
        <end position="23"/>
    </location>
    <ligand>
        <name>phosphoenolpyruvate</name>
        <dbReference type="ChEBI" id="CHEBI:58702"/>
    </ligand>
</feature>
<feature type="binding site" evidence="1">
    <location>
        <position position="92"/>
    </location>
    <ligand>
        <name>UDP-N-acetyl-alpha-D-glucosamine</name>
        <dbReference type="ChEBI" id="CHEBI:57705"/>
    </ligand>
</feature>
<feature type="binding site" evidence="1">
    <location>
        <begin position="121"/>
        <end position="125"/>
    </location>
    <ligand>
        <name>UDP-N-acetyl-alpha-D-glucosamine</name>
        <dbReference type="ChEBI" id="CHEBI:57705"/>
    </ligand>
</feature>
<feature type="binding site" evidence="1">
    <location>
        <position position="304"/>
    </location>
    <ligand>
        <name>UDP-N-acetyl-alpha-D-glucosamine</name>
        <dbReference type="ChEBI" id="CHEBI:57705"/>
    </ligand>
</feature>
<feature type="binding site" evidence="1">
    <location>
        <position position="326"/>
    </location>
    <ligand>
        <name>UDP-N-acetyl-alpha-D-glucosamine</name>
        <dbReference type="ChEBI" id="CHEBI:57705"/>
    </ligand>
</feature>
<feature type="modified residue" description="2-(S-cysteinyl)pyruvic acid O-phosphothioketal" evidence="1">
    <location>
        <position position="116"/>
    </location>
</feature>
<comment type="function">
    <text evidence="1">Cell wall formation. Adds enolpyruvyl to UDP-N-acetylglucosamine.</text>
</comment>
<comment type="catalytic activity">
    <reaction evidence="1">
        <text>phosphoenolpyruvate + UDP-N-acetyl-alpha-D-glucosamine = UDP-N-acetyl-3-O-(1-carboxyvinyl)-alpha-D-glucosamine + phosphate</text>
        <dbReference type="Rhea" id="RHEA:18681"/>
        <dbReference type="ChEBI" id="CHEBI:43474"/>
        <dbReference type="ChEBI" id="CHEBI:57705"/>
        <dbReference type="ChEBI" id="CHEBI:58702"/>
        <dbReference type="ChEBI" id="CHEBI:68483"/>
        <dbReference type="EC" id="2.5.1.7"/>
    </reaction>
</comment>
<comment type="pathway">
    <text evidence="1">Cell wall biogenesis; peptidoglycan biosynthesis.</text>
</comment>
<comment type="subcellular location">
    <subcellularLocation>
        <location evidence="1">Cytoplasm</location>
    </subcellularLocation>
</comment>
<comment type="similarity">
    <text evidence="1">Belongs to the EPSP synthase family. MurA subfamily.</text>
</comment>
<gene>
    <name evidence="1" type="primary">murA</name>
    <name type="ordered locus">Rmet_3250</name>
</gene>
<protein>
    <recommendedName>
        <fullName evidence="1">UDP-N-acetylglucosamine 1-carboxyvinyltransferase</fullName>
        <ecNumber evidence="1">2.5.1.7</ecNumber>
    </recommendedName>
    <alternativeName>
        <fullName evidence="1">Enoylpyruvate transferase</fullName>
    </alternativeName>
    <alternativeName>
        <fullName evidence="1">UDP-N-acetylglucosamine enolpyruvyl transferase</fullName>
        <shortName evidence="1">EPT</shortName>
    </alternativeName>
</protein>
<organism>
    <name type="scientific">Cupriavidus metallidurans (strain ATCC 43123 / DSM 2839 / NBRC 102507 / CH34)</name>
    <name type="common">Ralstonia metallidurans</name>
    <dbReference type="NCBI Taxonomy" id="266264"/>
    <lineage>
        <taxon>Bacteria</taxon>
        <taxon>Pseudomonadati</taxon>
        <taxon>Pseudomonadota</taxon>
        <taxon>Betaproteobacteria</taxon>
        <taxon>Burkholderiales</taxon>
        <taxon>Burkholderiaceae</taxon>
        <taxon>Cupriavidus</taxon>
    </lineage>
</organism>